<name>COAD_STAA1</name>
<proteinExistence type="inferred from homology"/>
<gene>
    <name evidence="1" type="primary">coaD</name>
    <name type="ordered locus">SAHV_1116</name>
</gene>
<dbReference type="EC" id="2.7.7.3" evidence="1"/>
<dbReference type="EMBL" id="AP009324">
    <property type="protein sequence ID" value="BAF77999.1"/>
    <property type="molecule type" value="Genomic_DNA"/>
</dbReference>
<dbReference type="RefSeq" id="WP_000401377.1">
    <property type="nucleotide sequence ID" value="NZ_CTYB01000001.1"/>
</dbReference>
<dbReference type="SMR" id="A7X140"/>
<dbReference type="GeneID" id="98345441"/>
<dbReference type="KEGG" id="saw:SAHV_1116"/>
<dbReference type="HOGENOM" id="CLU_100149_0_1_9"/>
<dbReference type="UniPathway" id="UPA00241">
    <property type="reaction ID" value="UER00355"/>
</dbReference>
<dbReference type="GO" id="GO:0005737">
    <property type="term" value="C:cytoplasm"/>
    <property type="evidence" value="ECO:0007669"/>
    <property type="project" value="UniProtKB-SubCell"/>
</dbReference>
<dbReference type="GO" id="GO:0005524">
    <property type="term" value="F:ATP binding"/>
    <property type="evidence" value="ECO:0007669"/>
    <property type="project" value="UniProtKB-KW"/>
</dbReference>
<dbReference type="GO" id="GO:0004595">
    <property type="term" value="F:pantetheine-phosphate adenylyltransferase activity"/>
    <property type="evidence" value="ECO:0007669"/>
    <property type="project" value="UniProtKB-UniRule"/>
</dbReference>
<dbReference type="GO" id="GO:0015937">
    <property type="term" value="P:coenzyme A biosynthetic process"/>
    <property type="evidence" value="ECO:0007669"/>
    <property type="project" value="UniProtKB-UniRule"/>
</dbReference>
<dbReference type="CDD" id="cd02163">
    <property type="entry name" value="PPAT"/>
    <property type="match status" value="1"/>
</dbReference>
<dbReference type="Gene3D" id="3.40.50.620">
    <property type="entry name" value="HUPs"/>
    <property type="match status" value="1"/>
</dbReference>
<dbReference type="HAMAP" id="MF_00151">
    <property type="entry name" value="PPAT_bact"/>
    <property type="match status" value="1"/>
</dbReference>
<dbReference type="InterPro" id="IPR004821">
    <property type="entry name" value="Cyt_trans-like"/>
</dbReference>
<dbReference type="InterPro" id="IPR001980">
    <property type="entry name" value="PPAT"/>
</dbReference>
<dbReference type="InterPro" id="IPR014729">
    <property type="entry name" value="Rossmann-like_a/b/a_fold"/>
</dbReference>
<dbReference type="NCBIfam" id="TIGR01510">
    <property type="entry name" value="coaD_prev_kdtB"/>
    <property type="match status" value="1"/>
</dbReference>
<dbReference type="NCBIfam" id="TIGR00125">
    <property type="entry name" value="cyt_tran_rel"/>
    <property type="match status" value="1"/>
</dbReference>
<dbReference type="PANTHER" id="PTHR21342">
    <property type="entry name" value="PHOSPHOPANTETHEINE ADENYLYLTRANSFERASE"/>
    <property type="match status" value="1"/>
</dbReference>
<dbReference type="PANTHER" id="PTHR21342:SF1">
    <property type="entry name" value="PHOSPHOPANTETHEINE ADENYLYLTRANSFERASE"/>
    <property type="match status" value="1"/>
</dbReference>
<dbReference type="Pfam" id="PF01467">
    <property type="entry name" value="CTP_transf_like"/>
    <property type="match status" value="1"/>
</dbReference>
<dbReference type="PRINTS" id="PR01020">
    <property type="entry name" value="LPSBIOSNTHSS"/>
</dbReference>
<dbReference type="SUPFAM" id="SSF52374">
    <property type="entry name" value="Nucleotidylyl transferase"/>
    <property type="match status" value="1"/>
</dbReference>
<feature type="chain" id="PRO_1000011243" description="Phosphopantetheine adenylyltransferase">
    <location>
        <begin position="1"/>
        <end position="160"/>
    </location>
</feature>
<feature type="binding site" evidence="1">
    <location>
        <begin position="11"/>
        <end position="12"/>
    </location>
    <ligand>
        <name>ATP</name>
        <dbReference type="ChEBI" id="CHEBI:30616"/>
    </ligand>
</feature>
<feature type="binding site" evidence="1">
    <location>
        <position position="11"/>
    </location>
    <ligand>
        <name>substrate</name>
    </ligand>
</feature>
<feature type="binding site" evidence="1">
    <location>
        <position position="19"/>
    </location>
    <ligand>
        <name>ATP</name>
        <dbReference type="ChEBI" id="CHEBI:30616"/>
    </ligand>
</feature>
<feature type="binding site" evidence="1">
    <location>
        <position position="43"/>
    </location>
    <ligand>
        <name>substrate</name>
    </ligand>
</feature>
<feature type="binding site" evidence="1">
    <location>
        <position position="75"/>
    </location>
    <ligand>
        <name>substrate</name>
    </ligand>
</feature>
<feature type="binding site" evidence="1">
    <location>
        <position position="89"/>
    </location>
    <ligand>
        <name>substrate</name>
    </ligand>
</feature>
<feature type="binding site" evidence="1">
    <location>
        <begin position="90"/>
        <end position="92"/>
    </location>
    <ligand>
        <name>ATP</name>
        <dbReference type="ChEBI" id="CHEBI:30616"/>
    </ligand>
</feature>
<feature type="binding site" evidence="1">
    <location>
        <position position="100"/>
    </location>
    <ligand>
        <name>ATP</name>
        <dbReference type="ChEBI" id="CHEBI:30616"/>
    </ligand>
</feature>
<feature type="binding site" evidence="1">
    <location>
        <begin position="125"/>
        <end position="131"/>
    </location>
    <ligand>
        <name>ATP</name>
        <dbReference type="ChEBI" id="CHEBI:30616"/>
    </ligand>
</feature>
<feature type="site" description="Transition state stabilizer" evidence="1">
    <location>
        <position position="19"/>
    </location>
</feature>
<accession>A7X140</accession>
<protein>
    <recommendedName>
        <fullName evidence="1">Phosphopantetheine adenylyltransferase</fullName>
        <ecNumber evidence="1">2.7.7.3</ecNumber>
    </recommendedName>
    <alternativeName>
        <fullName evidence="1">Dephospho-CoA pyrophosphorylase</fullName>
    </alternativeName>
    <alternativeName>
        <fullName evidence="1">Pantetheine-phosphate adenylyltransferase</fullName>
        <shortName evidence="1">PPAT</shortName>
    </alternativeName>
</protein>
<keyword id="KW-0067">ATP-binding</keyword>
<keyword id="KW-0173">Coenzyme A biosynthesis</keyword>
<keyword id="KW-0963">Cytoplasm</keyword>
<keyword id="KW-0460">Magnesium</keyword>
<keyword id="KW-0547">Nucleotide-binding</keyword>
<keyword id="KW-0548">Nucleotidyltransferase</keyword>
<keyword id="KW-0808">Transferase</keyword>
<sequence length="160" mass="18371">MEHTIAVIPGSFDPITYGHLDIIERSTDRFDEIHVCVLKNSKKEGTFSLEERMDLIEQSVKHLPNVKVHQFSGLLVDYCEQVGAKTIIRGLRAVSDFEYELRLTSMNKKLNNEIETLYMMSSTNYSFISSSIVKEVAAYRADISEFVPPYVEKALKKKFK</sequence>
<evidence type="ECO:0000255" key="1">
    <source>
        <dbReference type="HAMAP-Rule" id="MF_00151"/>
    </source>
</evidence>
<comment type="function">
    <text evidence="1">Reversibly transfers an adenylyl group from ATP to 4'-phosphopantetheine, yielding dephospho-CoA (dPCoA) and pyrophosphate.</text>
</comment>
<comment type="catalytic activity">
    <reaction evidence="1">
        <text>(R)-4'-phosphopantetheine + ATP + H(+) = 3'-dephospho-CoA + diphosphate</text>
        <dbReference type="Rhea" id="RHEA:19801"/>
        <dbReference type="ChEBI" id="CHEBI:15378"/>
        <dbReference type="ChEBI" id="CHEBI:30616"/>
        <dbReference type="ChEBI" id="CHEBI:33019"/>
        <dbReference type="ChEBI" id="CHEBI:57328"/>
        <dbReference type="ChEBI" id="CHEBI:61723"/>
        <dbReference type="EC" id="2.7.7.3"/>
    </reaction>
</comment>
<comment type="cofactor">
    <cofactor evidence="1">
        <name>Mg(2+)</name>
        <dbReference type="ChEBI" id="CHEBI:18420"/>
    </cofactor>
</comment>
<comment type="pathway">
    <text evidence="1">Cofactor biosynthesis; coenzyme A biosynthesis; CoA from (R)-pantothenate: step 4/5.</text>
</comment>
<comment type="subunit">
    <text evidence="1">Homohexamer.</text>
</comment>
<comment type="subcellular location">
    <subcellularLocation>
        <location evidence="1">Cytoplasm</location>
    </subcellularLocation>
</comment>
<comment type="similarity">
    <text evidence="1">Belongs to the bacterial CoaD family.</text>
</comment>
<organism>
    <name type="scientific">Staphylococcus aureus (strain Mu3 / ATCC 700698)</name>
    <dbReference type="NCBI Taxonomy" id="418127"/>
    <lineage>
        <taxon>Bacteria</taxon>
        <taxon>Bacillati</taxon>
        <taxon>Bacillota</taxon>
        <taxon>Bacilli</taxon>
        <taxon>Bacillales</taxon>
        <taxon>Staphylococcaceae</taxon>
        <taxon>Staphylococcus</taxon>
    </lineage>
</organism>
<reference key="1">
    <citation type="journal article" date="2008" name="Antimicrob. Agents Chemother.">
        <title>Mutated response regulator graR is responsible for phenotypic conversion of Staphylococcus aureus from heterogeneous vancomycin-intermediate resistance to vancomycin-intermediate resistance.</title>
        <authorList>
            <person name="Neoh H.-M."/>
            <person name="Cui L."/>
            <person name="Yuzawa H."/>
            <person name="Takeuchi F."/>
            <person name="Matsuo M."/>
            <person name="Hiramatsu K."/>
        </authorList>
    </citation>
    <scope>NUCLEOTIDE SEQUENCE [LARGE SCALE GENOMIC DNA]</scope>
    <source>
        <strain>Mu3 / ATCC 700698</strain>
    </source>
</reference>